<sequence length="52" mass="5658">MLHYAMIFFVIAIIAAVLGFSGIAGAATNIAWILFVVFLILAVISMFRRGKV</sequence>
<protein>
    <recommendedName>
        <fullName evidence="1">UPF0391 membrane protein XOO4217</fullName>
    </recommendedName>
</protein>
<reference key="1">
    <citation type="journal article" date="2005" name="Nucleic Acids Res.">
        <title>The genome sequence of Xanthomonas oryzae pathovar oryzae KACC10331, the bacterial blight pathogen of rice.</title>
        <authorList>
            <person name="Lee B.-M."/>
            <person name="Park Y.-J."/>
            <person name="Park D.-S."/>
            <person name="Kang H.-W."/>
            <person name="Kim J.-G."/>
            <person name="Song E.-S."/>
            <person name="Park I.-C."/>
            <person name="Yoon U.-H."/>
            <person name="Hahn J.-H."/>
            <person name="Koo B.-S."/>
            <person name="Lee G.-B."/>
            <person name="Kim H."/>
            <person name="Park H.-S."/>
            <person name="Yoon K.-O."/>
            <person name="Kim J.-H."/>
            <person name="Jung C.-H."/>
            <person name="Koh N.-H."/>
            <person name="Seo J.-S."/>
            <person name="Go S.-J."/>
        </authorList>
    </citation>
    <scope>NUCLEOTIDE SEQUENCE [LARGE SCALE GENOMIC DNA]</scope>
    <source>
        <strain>KACC10331 / KXO85</strain>
    </source>
</reference>
<accession>Q5GV02</accession>
<evidence type="ECO:0000255" key="1">
    <source>
        <dbReference type="HAMAP-Rule" id="MF_01361"/>
    </source>
</evidence>
<proteinExistence type="inferred from homology"/>
<keyword id="KW-1003">Cell membrane</keyword>
<keyword id="KW-0472">Membrane</keyword>
<keyword id="KW-1185">Reference proteome</keyword>
<keyword id="KW-0812">Transmembrane</keyword>
<keyword id="KW-1133">Transmembrane helix</keyword>
<feature type="chain" id="PRO_0000256805" description="UPF0391 membrane protein XOO4217">
    <location>
        <begin position="1"/>
        <end position="52"/>
    </location>
</feature>
<feature type="transmembrane region" description="Helical" evidence="1">
    <location>
        <begin position="5"/>
        <end position="25"/>
    </location>
</feature>
<feature type="transmembrane region" description="Helical" evidence="1">
    <location>
        <begin position="27"/>
        <end position="47"/>
    </location>
</feature>
<name>Y4217_XANOR</name>
<gene>
    <name type="ordered locus">XOO4217</name>
</gene>
<organism>
    <name type="scientific">Xanthomonas oryzae pv. oryzae (strain KACC10331 / KXO85)</name>
    <dbReference type="NCBI Taxonomy" id="291331"/>
    <lineage>
        <taxon>Bacteria</taxon>
        <taxon>Pseudomonadati</taxon>
        <taxon>Pseudomonadota</taxon>
        <taxon>Gammaproteobacteria</taxon>
        <taxon>Lysobacterales</taxon>
        <taxon>Lysobacteraceae</taxon>
        <taxon>Xanthomonas</taxon>
    </lineage>
</organism>
<dbReference type="EMBL" id="AE013598">
    <property type="protein sequence ID" value="AAW77471.1"/>
    <property type="molecule type" value="Genomic_DNA"/>
</dbReference>
<dbReference type="STRING" id="291331.XOO4217"/>
<dbReference type="KEGG" id="xoo:XOO4217"/>
<dbReference type="HOGENOM" id="CLU_187346_0_1_6"/>
<dbReference type="Proteomes" id="UP000006735">
    <property type="component" value="Chromosome"/>
</dbReference>
<dbReference type="GO" id="GO:0005886">
    <property type="term" value="C:plasma membrane"/>
    <property type="evidence" value="ECO:0007669"/>
    <property type="project" value="UniProtKB-SubCell"/>
</dbReference>
<dbReference type="HAMAP" id="MF_01361">
    <property type="entry name" value="UPF0391"/>
    <property type="match status" value="1"/>
</dbReference>
<dbReference type="InterPro" id="IPR009760">
    <property type="entry name" value="DUF1328"/>
</dbReference>
<dbReference type="NCBIfam" id="NF010226">
    <property type="entry name" value="PRK13682.1-1"/>
    <property type="match status" value="1"/>
</dbReference>
<dbReference type="NCBIfam" id="NF010229">
    <property type="entry name" value="PRK13682.1-4"/>
    <property type="match status" value="1"/>
</dbReference>
<dbReference type="Pfam" id="PF07043">
    <property type="entry name" value="DUF1328"/>
    <property type="match status" value="1"/>
</dbReference>
<dbReference type="PIRSF" id="PIRSF036466">
    <property type="entry name" value="UCP036466"/>
    <property type="match status" value="1"/>
</dbReference>
<comment type="subcellular location">
    <subcellularLocation>
        <location evidence="1">Cell membrane</location>
        <topology evidence="1">Multi-pass membrane protein</topology>
    </subcellularLocation>
</comment>
<comment type="similarity">
    <text evidence="1">Belongs to the UPF0391 family.</text>
</comment>